<dbReference type="EC" id="6.3.2.9" evidence="1"/>
<dbReference type="EMBL" id="BA000031">
    <property type="protein sequence ID" value="BAC58721.1"/>
    <property type="molecule type" value="Genomic_DNA"/>
</dbReference>
<dbReference type="RefSeq" id="NP_796837.1">
    <property type="nucleotide sequence ID" value="NC_004603.1"/>
</dbReference>
<dbReference type="RefSeq" id="WP_005458170.1">
    <property type="nucleotide sequence ID" value="NC_004603.1"/>
</dbReference>
<dbReference type="SMR" id="Q87SG6"/>
<dbReference type="GeneID" id="1187926"/>
<dbReference type="KEGG" id="vpa:VP0458"/>
<dbReference type="PATRIC" id="fig|223926.6.peg.436"/>
<dbReference type="eggNOG" id="COG0771">
    <property type="taxonomic scope" value="Bacteria"/>
</dbReference>
<dbReference type="HOGENOM" id="CLU_032540_1_0_6"/>
<dbReference type="UniPathway" id="UPA00219"/>
<dbReference type="Proteomes" id="UP000002493">
    <property type="component" value="Chromosome 1"/>
</dbReference>
<dbReference type="GO" id="GO:0005737">
    <property type="term" value="C:cytoplasm"/>
    <property type="evidence" value="ECO:0007669"/>
    <property type="project" value="UniProtKB-SubCell"/>
</dbReference>
<dbReference type="GO" id="GO:0005524">
    <property type="term" value="F:ATP binding"/>
    <property type="evidence" value="ECO:0007669"/>
    <property type="project" value="UniProtKB-UniRule"/>
</dbReference>
<dbReference type="GO" id="GO:0008764">
    <property type="term" value="F:UDP-N-acetylmuramoylalanine-D-glutamate ligase activity"/>
    <property type="evidence" value="ECO:0007669"/>
    <property type="project" value="UniProtKB-UniRule"/>
</dbReference>
<dbReference type="GO" id="GO:0051301">
    <property type="term" value="P:cell division"/>
    <property type="evidence" value="ECO:0007669"/>
    <property type="project" value="UniProtKB-KW"/>
</dbReference>
<dbReference type="GO" id="GO:0071555">
    <property type="term" value="P:cell wall organization"/>
    <property type="evidence" value="ECO:0007669"/>
    <property type="project" value="UniProtKB-KW"/>
</dbReference>
<dbReference type="GO" id="GO:0009252">
    <property type="term" value="P:peptidoglycan biosynthetic process"/>
    <property type="evidence" value="ECO:0007669"/>
    <property type="project" value="UniProtKB-UniRule"/>
</dbReference>
<dbReference type="GO" id="GO:0008360">
    <property type="term" value="P:regulation of cell shape"/>
    <property type="evidence" value="ECO:0007669"/>
    <property type="project" value="UniProtKB-KW"/>
</dbReference>
<dbReference type="Gene3D" id="3.90.190.20">
    <property type="entry name" value="Mur ligase, C-terminal domain"/>
    <property type="match status" value="1"/>
</dbReference>
<dbReference type="Gene3D" id="3.40.1190.10">
    <property type="entry name" value="Mur-like, catalytic domain"/>
    <property type="match status" value="1"/>
</dbReference>
<dbReference type="Gene3D" id="3.40.50.720">
    <property type="entry name" value="NAD(P)-binding Rossmann-like Domain"/>
    <property type="match status" value="1"/>
</dbReference>
<dbReference type="HAMAP" id="MF_00639">
    <property type="entry name" value="MurD"/>
    <property type="match status" value="1"/>
</dbReference>
<dbReference type="InterPro" id="IPR036565">
    <property type="entry name" value="Mur-like_cat_sf"/>
</dbReference>
<dbReference type="InterPro" id="IPR004101">
    <property type="entry name" value="Mur_ligase_C"/>
</dbReference>
<dbReference type="InterPro" id="IPR036615">
    <property type="entry name" value="Mur_ligase_C_dom_sf"/>
</dbReference>
<dbReference type="InterPro" id="IPR013221">
    <property type="entry name" value="Mur_ligase_cen"/>
</dbReference>
<dbReference type="InterPro" id="IPR005762">
    <property type="entry name" value="MurD"/>
</dbReference>
<dbReference type="NCBIfam" id="TIGR01087">
    <property type="entry name" value="murD"/>
    <property type="match status" value="1"/>
</dbReference>
<dbReference type="PANTHER" id="PTHR43692">
    <property type="entry name" value="UDP-N-ACETYLMURAMOYLALANINE--D-GLUTAMATE LIGASE"/>
    <property type="match status" value="1"/>
</dbReference>
<dbReference type="PANTHER" id="PTHR43692:SF1">
    <property type="entry name" value="UDP-N-ACETYLMURAMOYLALANINE--D-GLUTAMATE LIGASE"/>
    <property type="match status" value="1"/>
</dbReference>
<dbReference type="Pfam" id="PF02875">
    <property type="entry name" value="Mur_ligase_C"/>
    <property type="match status" value="1"/>
</dbReference>
<dbReference type="Pfam" id="PF08245">
    <property type="entry name" value="Mur_ligase_M"/>
    <property type="match status" value="1"/>
</dbReference>
<dbReference type="Pfam" id="PF21799">
    <property type="entry name" value="MurD-like_N"/>
    <property type="match status" value="1"/>
</dbReference>
<dbReference type="SUPFAM" id="SSF51984">
    <property type="entry name" value="MurCD N-terminal domain"/>
    <property type="match status" value="1"/>
</dbReference>
<dbReference type="SUPFAM" id="SSF53623">
    <property type="entry name" value="MurD-like peptide ligases, catalytic domain"/>
    <property type="match status" value="1"/>
</dbReference>
<dbReference type="SUPFAM" id="SSF53244">
    <property type="entry name" value="MurD-like peptide ligases, peptide-binding domain"/>
    <property type="match status" value="1"/>
</dbReference>
<protein>
    <recommendedName>
        <fullName evidence="1">UDP-N-acetylmuramoylalanine--D-glutamate ligase</fullName>
        <ecNumber evidence="1">6.3.2.9</ecNumber>
    </recommendedName>
    <alternativeName>
        <fullName evidence="1">D-glutamic acid-adding enzyme</fullName>
    </alternativeName>
    <alternativeName>
        <fullName evidence="1">UDP-N-acetylmuramoyl-L-alanyl-D-glutamate synthetase</fullName>
    </alternativeName>
</protein>
<sequence length="437" mass="47232">MERWQNIHNVVVVGLGITGLSVVKHLRKTQPQLTVKVIDTRDNPPGAERLPEQVELHRGGWNTQWLAEADLVVTNPGIALATPEIQTVLAKGTPVVGDIELFAWAVNKPVVAITGSNGKSTVTDLTGVMAKAAGLTVGVGGNIGVPALELLEQDADLYVLELSSFQLETTSSLKLKAAAFLNLSEDHMDRYEGMADYRAAKLRIFDHAELAVVNRDDQETYPEVEMPVVTFGSDEQAYGLEVDGSRTWLLDHGQRVIASDELKLVGKHNLANALVVLALLKAAGVDYHNALNALKNYTGLTHRCQVVADNRGVKWVNDSKATNIASTMAALSGLESTGKLYLLVGGVGKGADFTPLKPIFATLNLQLCCFGLDGDDFMPLHESAIRFNTMEDVIQQISSQLKSGDMVMLSPACASFDQFDNFMARGDAFAVLAQKYA</sequence>
<organism>
    <name type="scientific">Vibrio parahaemolyticus serotype O3:K6 (strain RIMD 2210633)</name>
    <dbReference type="NCBI Taxonomy" id="223926"/>
    <lineage>
        <taxon>Bacteria</taxon>
        <taxon>Pseudomonadati</taxon>
        <taxon>Pseudomonadota</taxon>
        <taxon>Gammaproteobacteria</taxon>
        <taxon>Vibrionales</taxon>
        <taxon>Vibrionaceae</taxon>
        <taxon>Vibrio</taxon>
    </lineage>
</organism>
<name>MURD_VIBPA</name>
<proteinExistence type="inferred from homology"/>
<reference key="1">
    <citation type="journal article" date="2003" name="Lancet">
        <title>Genome sequence of Vibrio parahaemolyticus: a pathogenic mechanism distinct from that of V. cholerae.</title>
        <authorList>
            <person name="Makino K."/>
            <person name="Oshima K."/>
            <person name="Kurokawa K."/>
            <person name="Yokoyama K."/>
            <person name="Uda T."/>
            <person name="Tagomori K."/>
            <person name="Iijima Y."/>
            <person name="Najima M."/>
            <person name="Nakano M."/>
            <person name="Yamashita A."/>
            <person name="Kubota Y."/>
            <person name="Kimura S."/>
            <person name="Yasunaga T."/>
            <person name="Honda T."/>
            <person name="Shinagawa H."/>
            <person name="Hattori M."/>
            <person name="Iida T."/>
        </authorList>
    </citation>
    <scope>NUCLEOTIDE SEQUENCE [LARGE SCALE GENOMIC DNA]</scope>
    <source>
        <strain>RIMD 2210633</strain>
    </source>
</reference>
<accession>Q87SG6</accession>
<keyword id="KW-0067">ATP-binding</keyword>
<keyword id="KW-0131">Cell cycle</keyword>
<keyword id="KW-0132">Cell division</keyword>
<keyword id="KW-0133">Cell shape</keyword>
<keyword id="KW-0961">Cell wall biogenesis/degradation</keyword>
<keyword id="KW-0963">Cytoplasm</keyword>
<keyword id="KW-0436">Ligase</keyword>
<keyword id="KW-0547">Nucleotide-binding</keyword>
<keyword id="KW-0573">Peptidoglycan synthesis</keyword>
<comment type="function">
    <text evidence="1">Cell wall formation. Catalyzes the addition of glutamate to the nucleotide precursor UDP-N-acetylmuramoyl-L-alanine (UMA).</text>
</comment>
<comment type="catalytic activity">
    <reaction evidence="1">
        <text>UDP-N-acetyl-alpha-D-muramoyl-L-alanine + D-glutamate + ATP = UDP-N-acetyl-alpha-D-muramoyl-L-alanyl-D-glutamate + ADP + phosphate + H(+)</text>
        <dbReference type="Rhea" id="RHEA:16429"/>
        <dbReference type="ChEBI" id="CHEBI:15378"/>
        <dbReference type="ChEBI" id="CHEBI:29986"/>
        <dbReference type="ChEBI" id="CHEBI:30616"/>
        <dbReference type="ChEBI" id="CHEBI:43474"/>
        <dbReference type="ChEBI" id="CHEBI:83898"/>
        <dbReference type="ChEBI" id="CHEBI:83900"/>
        <dbReference type="ChEBI" id="CHEBI:456216"/>
        <dbReference type="EC" id="6.3.2.9"/>
    </reaction>
</comment>
<comment type="pathway">
    <text evidence="1">Cell wall biogenesis; peptidoglycan biosynthesis.</text>
</comment>
<comment type="subcellular location">
    <subcellularLocation>
        <location evidence="1">Cytoplasm</location>
    </subcellularLocation>
</comment>
<comment type="similarity">
    <text evidence="1">Belongs to the MurCDEF family.</text>
</comment>
<gene>
    <name evidence="1" type="primary">murD</name>
    <name type="ordered locus">VP0458</name>
</gene>
<evidence type="ECO:0000255" key="1">
    <source>
        <dbReference type="HAMAP-Rule" id="MF_00639"/>
    </source>
</evidence>
<feature type="chain" id="PRO_0000109121" description="UDP-N-acetylmuramoylalanine--D-glutamate ligase">
    <location>
        <begin position="1"/>
        <end position="437"/>
    </location>
</feature>
<feature type="binding site" evidence="1">
    <location>
        <begin position="115"/>
        <end position="121"/>
    </location>
    <ligand>
        <name>ATP</name>
        <dbReference type="ChEBI" id="CHEBI:30616"/>
    </ligand>
</feature>